<feature type="chain" id="PRO_0000237753" description="2-C-methyl-D-erythritol 2,4-cyclodiphosphate synthase">
    <location>
        <begin position="1"/>
        <end position="159"/>
    </location>
</feature>
<feature type="binding site" evidence="1">
    <location>
        <begin position="8"/>
        <end position="10"/>
    </location>
    <ligand>
        <name>4-CDP-2-C-methyl-D-erythritol 2-phosphate</name>
        <dbReference type="ChEBI" id="CHEBI:57919"/>
    </ligand>
</feature>
<feature type="binding site" evidence="1">
    <location>
        <position position="8"/>
    </location>
    <ligand>
        <name>a divalent metal cation</name>
        <dbReference type="ChEBI" id="CHEBI:60240"/>
    </ligand>
</feature>
<feature type="binding site" evidence="1">
    <location>
        <position position="10"/>
    </location>
    <ligand>
        <name>a divalent metal cation</name>
        <dbReference type="ChEBI" id="CHEBI:60240"/>
    </ligand>
</feature>
<feature type="binding site" evidence="1">
    <location>
        <begin position="34"/>
        <end position="35"/>
    </location>
    <ligand>
        <name>4-CDP-2-C-methyl-D-erythritol 2-phosphate</name>
        <dbReference type="ChEBI" id="CHEBI:57919"/>
    </ligand>
</feature>
<feature type="binding site" evidence="1">
    <location>
        <position position="42"/>
    </location>
    <ligand>
        <name>a divalent metal cation</name>
        <dbReference type="ChEBI" id="CHEBI:60240"/>
    </ligand>
</feature>
<feature type="binding site" evidence="1">
    <location>
        <begin position="56"/>
        <end position="58"/>
    </location>
    <ligand>
        <name>4-CDP-2-C-methyl-D-erythritol 2-phosphate</name>
        <dbReference type="ChEBI" id="CHEBI:57919"/>
    </ligand>
</feature>
<feature type="binding site" evidence="1">
    <location>
        <begin position="61"/>
        <end position="65"/>
    </location>
    <ligand>
        <name>4-CDP-2-C-methyl-D-erythritol 2-phosphate</name>
        <dbReference type="ChEBI" id="CHEBI:57919"/>
    </ligand>
</feature>
<feature type="binding site" evidence="1">
    <location>
        <begin position="100"/>
        <end position="106"/>
    </location>
    <ligand>
        <name>4-CDP-2-C-methyl-D-erythritol 2-phosphate</name>
        <dbReference type="ChEBI" id="CHEBI:57919"/>
    </ligand>
</feature>
<feature type="binding site" evidence="1">
    <location>
        <begin position="132"/>
        <end position="135"/>
    </location>
    <ligand>
        <name>4-CDP-2-C-methyl-D-erythritol 2-phosphate</name>
        <dbReference type="ChEBI" id="CHEBI:57919"/>
    </ligand>
</feature>
<feature type="binding site" evidence="1">
    <location>
        <position position="139"/>
    </location>
    <ligand>
        <name>4-CDP-2-C-methyl-D-erythritol 2-phosphate</name>
        <dbReference type="ChEBI" id="CHEBI:57919"/>
    </ligand>
</feature>
<feature type="binding site" evidence="1">
    <location>
        <position position="142"/>
    </location>
    <ligand>
        <name>4-CDP-2-C-methyl-D-erythritol 2-phosphate</name>
        <dbReference type="ChEBI" id="CHEBI:57919"/>
    </ligand>
</feature>
<feature type="site" description="Transition state stabilizer" evidence="1">
    <location>
        <position position="34"/>
    </location>
</feature>
<feature type="site" description="Transition state stabilizer" evidence="1">
    <location>
        <position position="133"/>
    </location>
</feature>
<protein>
    <recommendedName>
        <fullName evidence="1">2-C-methyl-D-erythritol 2,4-cyclodiphosphate synthase</fullName>
        <shortName evidence="1">MECDP-synthase</shortName>
        <shortName evidence="1">MECPP-synthase</shortName>
        <shortName evidence="1">MECPS</shortName>
        <ecNumber evidence="1">4.6.1.12</ecNumber>
    </recommendedName>
</protein>
<organism>
    <name type="scientific">Shigella dysenteriae serotype 1 (strain Sd197)</name>
    <dbReference type="NCBI Taxonomy" id="300267"/>
    <lineage>
        <taxon>Bacteria</taxon>
        <taxon>Pseudomonadati</taxon>
        <taxon>Pseudomonadota</taxon>
        <taxon>Gammaproteobacteria</taxon>
        <taxon>Enterobacterales</taxon>
        <taxon>Enterobacteriaceae</taxon>
        <taxon>Shigella</taxon>
    </lineage>
</organism>
<keyword id="KW-0414">Isoprene biosynthesis</keyword>
<keyword id="KW-0456">Lyase</keyword>
<keyword id="KW-0479">Metal-binding</keyword>
<keyword id="KW-1185">Reference proteome</keyword>
<gene>
    <name evidence="1" type="primary">ispF</name>
    <name type="ordered locus">SDY_2945</name>
</gene>
<evidence type="ECO:0000255" key="1">
    <source>
        <dbReference type="HAMAP-Rule" id="MF_00107"/>
    </source>
</evidence>
<sequence length="159" mass="16898">MRIGHGFDVHAFGGEGPIIIGGVRIPYEKGLLAHSDGDVALHALTDALLGAAALGDIGKLFPDTDPAFKGADSRELLREAWRRIQAKGYTLGNVDVTIIAQAPKMLPHIPQMRVFIAEDLGCHMDDVNVKATTTEKLGFTGRGEGIACEAVALLIKATK</sequence>
<accession>Q32CI4</accession>
<dbReference type="EC" id="4.6.1.12" evidence="1"/>
<dbReference type="EMBL" id="CP000034">
    <property type="protein sequence ID" value="ABB62971.1"/>
    <property type="molecule type" value="Genomic_DNA"/>
</dbReference>
<dbReference type="RefSeq" id="WP_001219242.1">
    <property type="nucleotide sequence ID" value="NC_007606.1"/>
</dbReference>
<dbReference type="RefSeq" id="YP_404462.1">
    <property type="nucleotide sequence ID" value="NC_007606.1"/>
</dbReference>
<dbReference type="SMR" id="Q32CI4"/>
<dbReference type="STRING" id="300267.SDY_2945"/>
<dbReference type="EnsemblBacteria" id="ABB62971">
    <property type="protein sequence ID" value="ABB62971"/>
    <property type="gene ID" value="SDY_2945"/>
</dbReference>
<dbReference type="GeneID" id="93779260"/>
<dbReference type="KEGG" id="sdy:SDY_2945"/>
<dbReference type="PATRIC" id="fig|300267.13.peg.3537"/>
<dbReference type="HOGENOM" id="CLU_084630_2_0_6"/>
<dbReference type="UniPathway" id="UPA00056">
    <property type="reaction ID" value="UER00095"/>
</dbReference>
<dbReference type="Proteomes" id="UP000002716">
    <property type="component" value="Chromosome"/>
</dbReference>
<dbReference type="GO" id="GO:0008685">
    <property type="term" value="F:2-C-methyl-D-erythritol 2,4-cyclodiphosphate synthase activity"/>
    <property type="evidence" value="ECO:0007669"/>
    <property type="project" value="UniProtKB-UniRule"/>
</dbReference>
<dbReference type="GO" id="GO:0046872">
    <property type="term" value="F:metal ion binding"/>
    <property type="evidence" value="ECO:0007669"/>
    <property type="project" value="UniProtKB-KW"/>
</dbReference>
<dbReference type="GO" id="GO:0019288">
    <property type="term" value="P:isopentenyl diphosphate biosynthetic process, methylerythritol 4-phosphate pathway"/>
    <property type="evidence" value="ECO:0007669"/>
    <property type="project" value="UniProtKB-UniRule"/>
</dbReference>
<dbReference type="GO" id="GO:0016114">
    <property type="term" value="P:terpenoid biosynthetic process"/>
    <property type="evidence" value="ECO:0007669"/>
    <property type="project" value="InterPro"/>
</dbReference>
<dbReference type="CDD" id="cd00554">
    <property type="entry name" value="MECDP_synthase"/>
    <property type="match status" value="1"/>
</dbReference>
<dbReference type="FunFam" id="3.30.1330.50:FF:000001">
    <property type="entry name" value="2-C-methyl-D-erythritol 2,4-cyclodiphosphate synthase"/>
    <property type="match status" value="1"/>
</dbReference>
<dbReference type="Gene3D" id="3.30.1330.50">
    <property type="entry name" value="2-C-methyl-D-erythritol 2,4-cyclodiphosphate synthase"/>
    <property type="match status" value="1"/>
</dbReference>
<dbReference type="HAMAP" id="MF_00107">
    <property type="entry name" value="IspF"/>
    <property type="match status" value="1"/>
</dbReference>
<dbReference type="InterPro" id="IPR003526">
    <property type="entry name" value="MECDP_synthase"/>
</dbReference>
<dbReference type="InterPro" id="IPR020555">
    <property type="entry name" value="MECDP_synthase_CS"/>
</dbReference>
<dbReference type="InterPro" id="IPR036571">
    <property type="entry name" value="MECDP_synthase_sf"/>
</dbReference>
<dbReference type="NCBIfam" id="TIGR00151">
    <property type="entry name" value="ispF"/>
    <property type="match status" value="1"/>
</dbReference>
<dbReference type="PANTHER" id="PTHR43181">
    <property type="entry name" value="2-C-METHYL-D-ERYTHRITOL 2,4-CYCLODIPHOSPHATE SYNTHASE, CHLOROPLASTIC"/>
    <property type="match status" value="1"/>
</dbReference>
<dbReference type="PANTHER" id="PTHR43181:SF1">
    <property type="entry name" value="2-C-METHYL-D-ERYTHRITOL 2,4-CYCLODIPHOSPHATE SYNTHASE, CHLOROPLASTIC"/>
    <property type="match status" value="1"/>
</dbReference>
<dbReference type="Pfam" id="PF02542">
    <property type="entry name" value="YgbB"/>
    <property type="match status" value="1"/>
</dbReference>
<dbReference type="SUPFAM" id="SSF69765">
    <property type="entry name" value="IpsF-like"/>
    <property type="match status" value="1"/>
</dbReference>
<dbReference type="PROSITE" id="PS01350">
    <property type="entry name" value="ISPF"/>
    <property type="match status" value="1"/>
</dbReference>
<proteinExistence type="inferred from homology"/>
<comment type="function">
    <text evidence="1">Involved in the biosynthesis of isopentenyl diphosphate (IPP) and dimethylallyl diphosphate (DMAPP), two major building blocks of isoprenoid compounds. Catalyzes the conversion of 4-diphosphocytidyl-2-C-methyl-D-erythritol 2-phosphate (CDP-ME2P) to 2-C-methyl-D-erythritol 2,4-cyclodiphosphate (ME-CPP) with a corresponding release of cytidine 5-monophosphate (CMP).</text>
</comment>
<comment type="catalytic activity">
    <reaction evidence="1">
        <text>4-CDP-2-C-methyl-D-erythritol 2-phosphate = 2-C-methyl-D-erythritol 2,4-cyclic diphosphate + CMP</text>
        <dbReference type="Rhea" id="RHEA:23864"/>
        <dbReference type="ChEBI" id="CHEBI:57919"/>
        <dbReference type="ChEBI" id="CHEBI:58483"/>
        <dbReference type="ChEBI" id="CHEBI:60377"/>
        <dbReference type="EC" id="4.6.1.12"/>
    </reaction>
</comment>
<comment type="cofactor">
    <cofactor evidence="1">
        <name>a divalent metal cation</name>
        <dbReference type="ChEBI" id="CHEBI:60240"/>
    </cofactor>
    <text evidence="1">Binds 1 divalent metal cation per subunit.</text>
</comment>
<comment type="pathway">
    <text evidence="1">Isoprenoid biosynthesis; isopentenyl diphosphate biosynthesis via DXP pathway; isopentenyl diphosphate from 1-deoxy-D-xylulose 5-phosphate: step 4/6.</text>
</comment>
<comment type="subunit">
    <text evidence="1">Homotrimer.</text>
</comment>
<comment type="similarity">
    <text evidence="1">Belongs to the IspF family.</text>
</comment>
<name>ISPF_SHIDS</name>
<reference key="1">
    <citation type="journal article" date="2005" name="Nucleic Acids Res.">
        <title>Genome dynamics and diversity of Shigella species, the etiologic agents of bacillary dysentery.</title>
        <authorList>
            <person name="Yang F."/>
            <person name="Yang J."/>
            <person name="Zhang X."/>
            <person name="Chen L."/>
            <person name="Jiang Y."/>
            <person name="Yan Y."/>
            <person name="Tang X."/>
            <person name="Wang J."/>
            <person name="Xiong Z."/>
            <person name="Dong J."/>
            <person name="Xue Y."/>
            <person name="Zhu Y."/>
            <person name="Xu X."/>
            <person name="Sun L."/>
            <person name="Chen S."/>
            <person name="Nie H."/>
            <person name="Peng J."/>
            <person name="Xu J."/>
            <person name="Wang Y."/>
            <person name="Yuan Z."/>
            <person name="Wen Y."/>
            <person name="Yao Z."/>
            <person name="Shen Y."/>
            <person name="Qiang B."/>
            <person name="Hou Y."/>
            <person name="Yu J."/>
            <person name="Jin Q."/>
        </authorList>
    </citation>
    <scope>NUCLEOTIDE SEQUENCE [LARGE SCALE GENOMIC DNA]</scope>
    <source>
        <strain>Sd197</strain>
    </source>
</reference>